<feature type="chain" id="PRO_0000094288" description="Elongation factor P">
    <location>
        <begin position="1"/>
        <end position="187"/>
    </location>
</feature>
<name>EFP_MYCPA</name>
<comment type="function">
    <text evidence="1">Involved in peptide bond synthesis. Stimulates efficient translation and peptide-bond synthesis on native or reconstituted 70S ribosomes in vitro. Probably functions indirectly by altering the affinity of the ribosome for aminoacyl-tRNA, thus increasing their reactivity as acceptors for peptidyl transferase.</text>
</comment>
<comment type="pathway">
    <text evidence="1">Protein biosynthesis; polypeptide chain elongation.</text>
</comment>
<comment type="subcellular location">
    <subcellularLocation>
        <location evidence="1">Cytoplasm</location>
    </subcellularLocation>
</comment>
<comment type="similarity">
    <text evidence="1">Belongs to the elongation factor P family.</text>
</comment>
<reference key="1">
    <citation type="journal article" date="2005" name="Proc. Natl. Acad. Sci. U.S.A.">
        <title>The complete genome sequence of Mycobacterium avium subspecies paratuberculosis.</title>
        <authorList>
            <person name="Li L."/>
            <person name="Bannantine J.P."/>
            <person name="Zhang Q."/>
            <person name="Amonsin A."/>
            <person name="May B.J."/>
            <person name="Alt D."/>
            <person name="Banerji N."/>
            <person name="Kanjilal S."/>
            <person name="Kapur V."/>
        </authorList>
    </citation>
    <scope>NUCLEOTIDE SEQUENCE [LARGE SCALE GENOMIC DNA]</scope>
    <source>
        <strain>ATCC BAA-968 / K-10</strain>
    </source>
</reference>
<keyword id="KW-0963">Cytoplasm</keyword>
<keyword id="KW-0251">Elongation factor</keyword>
<keyword id="KW-0648">Protein biosynthesis</keyword>
<keyword id="KW-1185">Reference proteome</keyword>
<protein>
    <recommendedName>
        <fullName evidence="1">Elongation factor P</fullName>
        <shortName evidence="1">EF-P</shortName>
    </recommendedName>
</protein>
<accession>Q741J3</accession>
<organism>
    <name type="scientific">Mycolicibacterium paratuberculosis (strain ATCC BAA-968 / K-10)</name>
    <name type="common">Mycobacterium paratuberculosis</name>
    <dbReference type="NCBI Taxonomy" id="262316"/>
    <lineage>
        <taxon>Bacteria</taxon>
        <taxon>Bacillati</taxon>
        <taxon>Actinomycetota</taxon>
        <taxon>Actinomycetes</taxon>
        <taxon>Mycobacteriales</taxon>
        <taxon>Mycobacteriaceae</taxon>
        <taxon>Mycobacterium</taxon>
        <taxon>Mycobacterium avium complex (MAC)</taxon>
    </lineage>
</organism>
<proteinExistence type="inferred from homology"/>
<sequence length="187" mass="20472">MASTADFKNGLVLVIDGQLWQIVEFQHVKPGKGPAFVRTKLKNVLSGKVVDKTYNAGVKVETATVDRRDTTYLYRDGSDFVFMDSQDYEQHPLPESLVGDAARFLLEGMPVQVAFHNGSPLYIELPVSVEMEVTHTEPGLQGDRSSAGTKPATVETGAEIQVPLFINTGDKLKVDTRDGSYLGRVNA</sequence>
<evidence type="ECO:0000255" key="1">
    <source>
        <dbReference type="HAMAP-Rule" id="MF_00141"/>
    </source>
</evidence>
<gene>
    <name evidence="1" type="primary">efp</name>
    <name type="ordered locus">MAP_1097</name>
</gene>
<dbReference type="EMBL" id="AE016958">
    <property type="protein sequence ID" value="AAS03414.1"/>
    <property type="molecule type" value="Genomic_DNA"/>
</dbReference>
<dbReference type="RefSeq" id="WP_003872627.1">
    <property type="nucleotide sequence ID" value="NZ_CP106873.1"/>
</dbReference>
<dbReference type="SMR" id="Q741J3"/>
<dbReference type="STRING" id="262316.MAP_1097"/>
<dbReference type="GeneID" id="75270808"/>
<dbReference type="KEGG" id="mpa:MAP_1097"/>
<dbReference type="eggNOG" id="COG0231">
    <property type="taxonomic scope" value="Bacteria"/>
</dbReference>
<dbReference type="HOGENOM" id="CLU_074944_0_1_11"/>
<dbReference type="UniPathway" id="UPA00345"/>
<dbReference type="Proteomes" id="UP000000580">
    <property type="component" value="Chromosome"/>
</dbReference>
<dbReference type="GO" id="GO:0005737">
    <property type="term" value="C:cytoplasm"/>
    <property type="evidence" value="ECO:0007669"/>
    <property type="project" value="UniProtKB-SubCell"/>
</dbReference>
<dbReference type="GO" id="GO:0003746">
    <property type="term" value="F:translation elongation factor activity"/>
    <property type="evidence" value="ECO:0007669"/>
    <property type="project" value="UniProtKB-UniRule"/>
</dbReference>
<dbReference type="GO" id="GO:0043043">
    <property type="term" value="P:peptide biosynthetic process"/>
    <property type="evidence" value="ECO:0007669"/>
    <property type="project" value="InterPro"/>
</dbReference>
<dbReference type="CDD" id="cd04470">
    <property type="entry name" value="S1_EF-P_repeat_1"/>
    <property type="match status" value="1"/>
</dbReference>
<dbReference type="CDD" id="cd05794">
    <property type="entry name" value="S1_EF-P_repeat_2"/>
    <property type="match status" value="1"/>
</dbReference>
<dbReference type="FunFam" id="2.30.30.30:FF:000003">
    <property type="entry name" value="Elongation factor P"/>
    <property type="match status" value="1"/>
</dbReference>
<dbReference type="FunFam" id="2.40.50.140:FF:000004">
    <property type="entry name" value="Elongation factor P"/>
    <property type="match status" value="1"/>
</dbReference>
<dbReference type="FunFam" id="2.40.50.140:FF:000009">
    <property type="entry name" value="Elongation factor P"/>
    <property type="match status" value="1"/>
</dbReference>
<dbReference type="Gene3D" id="2.30.30.30">
    <property type="match status" value="1"/>
</dbReference>
<dbReference type="Gene3D" id="2.40.50.140">
    <property type="entry name" value="Nucleic acid-binding proteins"/>
    <property type="match status" value="2"/>
</dbReference>
<dbReference type="HAMAP" id="MF_00141">
    <property type="entry name" value="EF_P"/>
    <property type="match status" value="1"/>
</dbReference>
<dbReference type="InterPro" id="IPR015365">
    <property type="entry name" value="Elong-fact-P_C"/>
</dbReference>
<dbReference type="InterPro" id="IPR012340">
    <property type="entry name" value="NA-bd_OB-fold"/>
</dbReference>
<dbReference type="InterPro" id="IPR014722">
    <property type="entry name" value="Rib_uL2_dom2"/>
</dbReference>
<dbReference type="InterPro" id="IPR020599">
    <property type="entry name" value="Transl_elong_fac_P/YeiP"/>
</dbReference>
<dbReference type="InterPro" id="IPR013185">
    <property type="entry name" value="Transl_elong_KOW-like"/>
</dbReference>
<dbReference type="InterPro" id="IPR001059">
    <property type="entry name" value="Transl_elong_P/YeiP_cen"/>
</dbReference>
<dbReference type="InterPro" id="IPR013852">
    <property type="entry name" value="Transl_elong_P/YeiP_CS"/>
</dbReference>
<dbReference type="InterPro" id="IPR011768">
    <property type="entry name" value="Transl_elongation_fac_P"/>
</dbReference>
<dbReference type="InterPro" id="IPR008991">
    <property type="entry name" value="Translation_prot_SH3-like_sf"/>
</dbReference>
<dbReference type="NCBIfam" id="TIGR00038">
    <property type="entry name" value="efp"/>
    <property type="match status" value="1"/>
</dbReference>
<dbReference type="NCBIfam" id="NF001810">
    <property type="entry name" value="PRK00529.1"/>
    <property type="match status" value="1"/>
</dbReference>
<dbReference type="PANTHER" id="PTHR30053">
    <property type="entry name" value="ELONGATION FACTOR P"/>
    <property type="match status" value="1"/>
</dbReference>
<dbReference type="PANTHER" id="PTHR30053:SF12">
    <property type="entry name" value="ELONGATION FACTOR P (EF-P) FAMILY PROTEIN"/>
    <property type="match status" value="1"/>
</dbReference>
<dbReference type="Pfam" id="PF01132">
    <property type="entry name" value="EFP"/>
    <property type="match status" value="1"/>
</dbReference>
<dbReference type="Pfam" id="PF08207">
    <property type="entry name" value="EFP_N"/>
    <property type="match status" value="1"/>
</dbReference>
<dbReference type="Pfam" id="PF09285">
    <property type="entry name" value="Elong-fact-P_C"/>
    <property type="match status" value="1"/>
</dbReference>
<dbReference type="PIRSF" id="PIRSF005901">
    <property type="entry name" value="EF-P"/>
    <property type="match status" value="1"/>
</dbReference>
<dbReference type="SMART" id="SM01185">
    <property type="entry name" value="EFP"/>
    <property type="match status" value="1"/>
</dbReference>
<dbReference type="SMART" id="SM00841">
    <property type="entry name" value="Elong-fact-P_C"/>
    <property type="match status" value="1"/>
</dbReference>
<dbReference type="SUPFAM" id="SSF50249">
    <property type="entry name" value="Nucleic acid-binding proteins"/>
    <property type="match status" value="2"/>
</dbReference>
<dbReference type="SUPFAM" id="SSF50104">
    <property type="entry name" value="Translation proteins SH3-like domain"/>
    <property type="match status" value="1"/>
</dbReference>
<dbReference type="PROSITE" id="PS01275">
    <property type="entry name" value="EFP"/>
    <property type="match status" value="1"/>
</dbReference>